<proteinExistence type="inferred from homology"/>
<protein>
    <recommendedName>
        <fullName evidence="1">Large ribosomal subunit protein uL3</fullName>
    </recommendedName>
    <alternativeName>
        <fullName evidence="3">50S ribosomal protein L3</fullName>
    </alternativeName>
</protein>
<name>RL3_CLOB1</name>
<dbReference type="EMBL" id="CP000726">
    <property type="protein sequence ID" value="ABS34479.1"/>
    <property type="molecule type" value="Genomic_DNA"/>
</dbReference>
<dbReference type="RefSeq" id="WP_012048354.1">
    <property type="nucleotide sequence ID" value="NC_009697.1"/>
</dbReference>
<dbReference type="SMR" id="A7FZ69"/>
<dbReference type="GeneID" id="5187746"/>
<dbReference type="KEGG" id="cba:CLB_3537"/>
<dbReference type="HOGENOM" id="CLU_044142_4_1_9"/>
<dbReference type="GO" id="GO:0022625">
    <property type="term" value="C:cytosolic large ribosomal subunit"/>
    <property type="evidence" value="ECO:0007669"/>
    <property type="project" value="TreeGrafter"/>
</dbReference>
<dbReference type="GO" id="GO:0019843">
    <property type="term" value="F:rRNA binding"/>
    <property type="evidence" value="ECO:0007669"/>
    <property type="project" value="UniProtKB-UniRule"/>
</dbReference>
<dbReference type="GO" id="GO:0003735">
    <property type="term" value="F:structural constituent of ribosome"/>
    <property type="evidence" value="ECO:0007669"/>
    <property type="project" value="InterPro"/>
</dbReference>
<dbReference type="GO" id="GO:0006412">
    <property type="term" value="P:translation"/>
    <property type="evidence" value="ECO:0007669"/>
    <property type="project" value="UniProtKB-UniRule"/>
</dbReference>
<dbReference type="FunFam" id="2.40.30.10:FF:000004">
    <property type="entry name" value="50S ribosomal protein L3"/>
    <property type="match status" value="1"/>
</dbReference>
<dbReference type="FunFam" id="3.30.160.810:FF:000001">
    <property type="entry name" value="50S ribosomal protein L3"/>
    <property type="match status" value="1"/>
</dbReference>
<dbReference type="Gene3D" id="3.30.160.810">
    <property type="match status" value="1"/>
</dbReference>
<dbReference type="Gene3D" id="2.40.30.10">
    <property type="entry name" value="Translation factors"/>
    <property type="match status" value="1"/>
</dbReference>
<dbReference type="HAMAP" id="MF_01325_B">
    <property type="entry name" value="Ribosomal_uL3_B"/>
    <property type="match status" value="1"/>
</dbReference>
<dbReference type="InterPro" id="IPR000597">
    <property type="entry name" value="Ribosomal_uL3"/>
</dbReference>
<dbReference type="InterPro" id="IPR019927">
    <property type="entry name" value="Ribosomal_uL3_bac/org-type"/>
</dbReference>
<dbReference type="InterPro" id="IPR019926">
    <property type="entry name" value="Ribosomal_uL3_CS"/>
</dbReference>
<dbReference type="InterPro" id="IPR009000">
    <property type="entry name" value="Transl_B-barrel_sf"/>
</dbReference>
<dbReference type="NCBIfam" id="TIGR03625">
    <property type="entry name" value="L3_bact"/>
    <property type="match status" value="1"/>
</dbReference>
<dbReference type="PANTHER" id="PTHR11229">
    <property type="entry name" value="50S RIBOSOMAL PROTEIN L3"/>
    <property type="match status" value="1"/>
</dbReference>
<dbReference type="PANTHER" id="PTHR11229:SF16">
    <property type="entry name" value="LARGE RIBOSOMAL SUBUNIT PROTEIN UL3C"/>
    <property type="match status" value="1"/>
</dbReference>
<dbReference type="Pfam" id="PF00297">
    <property type="entry name" value="Ribosomal_L3"/>
    <property type="match status" value="1"/>
</dbReference>
<dbReference type="SUPFAM" id="SSF50447">
    <property type="entry name" value="Translation proteins"/>
    <property type="match status" value="1"/>
</dbReference>
<dbReference type="PROSITE" id="PS00474">
    <property type="entry name" value="RIBOSOMAL_L3"/>
    <property type="match status" value="1"/>
</dbReference>
<organism>
    <name type="scientific">Clostridium botulinum (strain ATCC 19397 / Type A)</name>
    <dbReference type="NCBI Taxonomy" id="441770"/>
    <lineage>
        <taxon>Bacteria</taxon>
        <taxon>Bacillati</taxon>
        <taxon>Bacillota</taxon>
        <taxon>Clostridia</taxon>
        <taxon>Eubacteriales</taxon>
        <taxon>Clostridiaceae</taxon>
        <taxon>Clostridium</taxon>
    </lineage>
</organism>
<evidence type="ECO:0000255" key="1">
    <source>
        <dbReference type="HAMAP-Rule" id="MF_01325"/>
    </source>
</evidence>
<evidence type="ECO:0000256" key="2">
    <source>
        <dbReference type="SAM" id="MobiDB-lite"/>
    </source>
</evidence>
<evidence type="ECO:0000305" key="3"/>
<feature type="chain" id="PRO_1000052032" description="Large ribosomal subunit protein uL3">
    <location>
        <begin position="1"/>
        <end position="209"/>
    </location>
</feature>
<feature type="region of interest" description="Disordered" evidence="2">
    <location>
        <begin position="141"/>
        <end position="163"/>
    </location>
</feature>
<comment type="function">
    <text evidence="1">One of the primary rRNA binding proteins, it binds directly near the 3'-end of the 23S rRNA, where it nucleates assembly of the 50S subunit.</text>
</comment>
<comment type="subunit">
    <text evidence="1">Part of the 50S ribosomal subunit. Forms a cluster with proteins L14 and L19.</text>
</comment>
<comment type="similarity">
    <text evidence="1">Belongs to the universal ribosomal protein uL3 family.</text>
</comment>
<sequence length="209" mass="22860">MKKAILGKKLGMTQIFNENGKVIPVTVIEAGPCTVIQKKTVEKDGYEAIQVAFGDIREKLRNKPIKGHFAKAGVSVKRHIKEFKLEDSNSLEIGQEIKADVFEAGERVDISGVSKGKGFQGTIRRWNAHRGPMSHGSKFHRAVGSMGASSDPSRTFKNKRMPGHMGNVNTTVLNLEVVRIIPEKNLILIKGGVPGPNKGLVQIRNTVKA</sequence>
<gene>
    <name evidence="1" type="primary">rplC</name>
    <name type="ordered locus">CLB_3537</name>
</gene>
<reference key="1">
    <citation type="journal article" date="2007" name="PLoS ONE">
        <title>Analysis of the neurotoxin complex genes in Clostridium botulinum A1-A4 and B1 strains: BoNT/A3, /Ba4 and /B1 clusters are located within plasmids.</title>
        <authorList>
            <person name="Smith T.J."/>
            <person name="Hill K.K."/>
            <person name="Foley B.T."/>
            <person name="Detter J.C."/>
            <person name="Munk A.C."/>
            <person name="Bruce D.C."/>
            <person name="Doggett N.A."/>
            <person name="Smith L.A."/>
            <person name="Marks J.D."/>
            <person name="Xie G."/>
            <person name="Brettin T.S."/>
        </authorList>
    </citation>
    <scope>NUCLEOTIDE SEQUENCE [LARGE SCALE GENOMIC DNA]</scope>
    <source>
        <strain>ATCC 19397 / Type A</strain>
    </source>
</reference>
<keyword id="KW-0687">Ribonucleoprotein</keyword>
<keyword id="KW-0689">Ribosomal protein</keyword>
<keyword id="KW-0694">RNA-binding</keyword>
<keyword id="KW-0699">rRNA-binding</keyword>
<accession>A7FZ69</accession>